<name>ASNA_ECOK1</name>
<dbReference type="EC" id="6.3.1.1" evidence="1"/>
<dbReference type="EMBL" id="CP000468">
    <property type="protein sequence ID" value="ABJ03214.1"/>
    <property type="molecule type" value="Genomic_DNA"/>
</dbReference>
<dbReference type="RefSeq" id="WP_000845129.1">
    <property type="nucleotide sequence ID" value="NZ_CADILS010000011.1"/>
</dbReference>
<dbReference type="SMR" id="A1AHS4"/>
<dbReference type="KEGG" id="ecv:APECO1_2719"/>
<dbReference type="HOGENOM" id="CLU_071543_0_0_6"/>
<dbReference type="UniPathway" id="UPA00134">
    <property type="reaction ID" value="UER00194"/>
</dbReference>
<dbReference type="Proteomes" id="UP000008216">
    <property type="component" value="Chromosome"/>
</dbReference>
<dbReference type="GO" id="GO:0005829">
    <property type="term" value="C:cytosol"/>
    <property type="evidence" value="ECO:0007669"/>
    <property type="project" value="TreeGrafter"/>
</dbReference>
<dbReference type="GO" id="GO:0004071">
    <property type="term" value="F:aspartate-ammonia ligase activity"/>
    <property type="evidence" value="ECO:0007669"/>
    <property type="project" value="UniProtKB-UniRule"/>
</dbReference>
<dbReference type="GO" id="GO:0005524">
    <property type="term" value="F:ATP binding"/>
    <property type="evidence" value="ECO:0007669"/>
    <property type="project" value="UniProtKB-UniRule"/>
</dbReference>
<dbReference type="GO" id="GO:0070981">
    <property type="term" value="P:L-asparagine biosynthetic process"/>
    <property type="evidence" value="ECO:0007669"/>
    <property type="project" value="UniProtKB-UniRule"/>
</dbReference>
<dbReference type="CDD" id="cd00645">
    <property type="entry name" value="AsnA"/>
    <property type="match status" value="1"/>
</dbReference>
<dbReference type="FunFam" id="3.30.930.10:FF:000025">
    <property type="entry name" value="Aspartate--ammonia ligase"/>
    <property type="match status" value="1"/>
</dbReference>
<dbReference type="Gene3D" id="3.30.930.10">
    <property type="entry name" value="Bira Bifunctional Protein, Domain 2"/>
    <property type="match status" value="1"/>
</dbReference>
<dbReference type="HAMAP" id="MF_00555">
    <property type="entry name" value="AsnA"/>
    <property type="match status" value="1"/>
</dbReference>
<dbReference type="InterPro" id="IPR006195">
    <property type="entry name" value="aa-tRNA-synth_II"/>
</dbReference>
<dbReference type="InterPro" id="IPR045864">
    <property type="entry name" value="aa-tRNA-synth_II/BPL/LPL"/>
</dbReference>
<dbReference type="InterPro" id="IPR004618">
    <property type="entry name" value="AsnA"/>
</dbReference>
<dbReference type="NCBIfam" id="TIGR00669">
    <property type="entry name" value="asnA"/>
    <property type="match status" value="1"/>
</dbReference>
<dbReference type="PANTHER" id="PTHR30073">
    <property type="entry name" value="ASPARTATE--AMMONIA LIGASE"/>
    <property type="match status" value="1"/>
</dbReference>
<dbReference type="PANTHER" id="PTHR30073:SF5">
    <property type="entry name" value="ASPARTATE--AMMONIA LIGASE"/>
    <property type="match status" value="1"/>
</dbReference>
<dbReference type="Pfam" id="PF03590">
    <property type="entry name" value="AsnA"/>
    <property type="match status" value="1"/>
</dbReference>
<dbReference type="PIRSF" id="PIRSF001555">
    <property type="entry name" value="Asp_ammon_ligase"/>
    <property type="match status" value="1"/>
</dbReference>
<dbReference type="SUPFAM" id="SSF55681">
    <property type="entry name" value="Class II aaRS and biotin synthetases"/>
    <property type="match status" value="1"/>
</dbReference>
<dbReference type="PROSITE" id="PS50862">
    <property type="entry name" value="AA_TRNA_LIGASE_II"/>
    <property type="match status" value="1"/>
</dbReference>
<gene>
    <name evidence="1" type="primary">asnA</name>
    <name type="ordered locus">Ecok1_37200</name>
    <name type="ORF">APECO1_2719</name>
</gene>
<sequence length="330" mass="36723">MKTAYIAKQRQISFVKSHFSRQLEERLGLIEVQAPILSRVGDGTQDNLSGCEKAVQVKVKALPDAQFEVVHSLAKWKRQTLGQHDFSAGEGLYTHMKALRPDEDRLSPLHSVYVDQWDWERVMGDGERQFSTLKSTVEAIWEGIKATEAAVSEEFGLAPFLPDQIHFVHSQELLSRYPELDAKGRERAIAKDLGAVFLVGIGGKLSDGHRHDVRAPDYDDWSTPSELGHAGLNGDILVWNPVLEDAFELSSMGIRVDADTLKHQLALTGDEDRLELEWHQALLRGEMPQTIGGGIGQSRLTMLLLQLPHIGQVQCGVWPAAVRESVPSLL</sequence>
<accession>A1AHS4</accession>
<organism>
    <name type="scientific">Escherichia coli O1:K1 / APEC</name>
    <dbReference type="NCBI Taxonomy" id="405955"/>
    <lineage>
        <taxon>Bacteria</taxon>
        <taxon>Pseudomonadati</taxon>
        <taxon>Pseudomonadota</taxon>
        <taxon>Gammaproteobacteria</taxon>
        <taxon>Enterobacterales</taxon>
        <taxon>Enterobacteriaceae</taxon>
        <taxon>Escherichia</taxon>
    </lineage>
</organism>
<comment type="catalytic activity">
    <reaction evidence="1">
        <text>L-aspartate + NH4(+) + ATP = L-asparagine + AMP + diphosphate + H(+)</text>
        <dbReference type="Rhea" id="RHEA:11372"/>
        <dbReference type="ChEBI" id="CHEBI:15378"/>
        <dbReference type="ChEBI" id="CHEBI:28938"/>
        <dbReference type="ChEBI" id="CHEBI:29991"/>
        <dbReference type="ChEBI" id="CHEBI:30616"/>
        <dbReference type="ChEBI" id="CHEBI:33019"/>
        <dbReference type="ChEBI" id="CHEBI:58048"/>
        <dbReference type="ChEBI" id="CHEBI:456215"/>
        <dbReference type="EC" id="6.3.1.1"/>
    </reaction>
</comment>
<comment type="pathway">
    <text evidence="1">Amino-acid biosynthesis; L-asparagine biosynthesis; L-asparagine from L-aspartate (ammonia route): step 1/1.</text>
</comment>
<comment type="subcellular location">
    <subcellularLocation>
        <location evidence="1">Cytoplasm</location>
    </subcellularLocation>
</comment>
<comment type="similarity">
    <text evidence="1">Belongs to the class-II aminoacyl-tRNA synthetase family. AsnA subfamily.</text>
</comment>
<keyword id="KW-0028">Amino-acid biosynthesis</keyword>
<keyword id="KW-0061">Asparagine biosynthesis</keyword>
<keyword id="KW-0067">ATP-binding</keyword>
<keyword id="KW-0963">Cytoplasm</keyword>
<keyword id="KW-0436">Ligase</keyword>
<keyword id="KW-0547">Nucleotide-binding</keyword>
<keyword id="KW-1185">Reference proteome</keyword>
<reference key="1">
    <citation type="journal article" date="2007" name="J. Bacteriol.">
        <title>The genome sequence of avian pathogenic Escherichia coli strain O1:K1:H7 shares strong similarities with human extraintestinal pathogenic E. coli genomes.</title>
        <authorList>
            <person name="Johnson T.J."/>
            <person name="Kariyawasam S."/>
            <person name="Wannemuehler Y."/>
            <person name="Mangiamele P."/>
            <person name="Johnson S.J."/>
            <person name="Doetkott C."/>
            <person name="Skyberg J.A."/>
            <person name="Lynne A.M."/>
            <person name="Johnson J.R."/>
            <person name="Nolan L.K."/>
        </authorList>
    </citation>
    <scope>NUCLEOTIDE SEQUENCE [LARGE SCALE GENOMIC DNA]</scope>
</reference>
<protein>
    <recommendedName>
        <fullName evidence="1">Aspartate--ammonia ligase</fullName>
        <ecNumber evidence="1">6.3.1.1</ecNumber>
    </recommendedName>
    <alternativeName>
        <fullName evidence="1">Asparagine synthetase A</fullName>
    </alternativeName>
</protein>
<evidence type="ECO:0000255" key="1">
    <source>
        <dbReference type="HAMAP-Rule" id="MF_00555"/>
    </source>
</evidence>
<feature type="chain" id="PRO_1000017941" description="Aspartate--ammonia ligase">
    <location>
        <begin position="1"/>
        <end position="330"/>
    </location>
</feature>
<proteinExistence type="inferred from homology"/>